<name>VRAR_STAA8</name>
<proteinExistence type="evidence at protein level"/>
<organism>
    <name type="scientific">Staphylococcus aureus (strain NCTC 8325 / PS 47)</name>
    <dbReference type="NCBI Taxonomy" id="93061"/>
    <lineage>
        <taxon>Bacteria</taxon>
        <taxon>Bacillati</taxon>
        <taxon>Bacillota</taxon>
        <taxon>Bacilli</taxon>
        <taxon>Bacillales</taxon>
        <taxon>Staphylococcaceae</taxon>
        <taxon>Staphylococcus</taxon>
    </lineage>
</organism>
<comment type="function">
    <text evidence="1 4">Member of the two-component regulatory system VraS/VraR involved in the control of the cell wall peptidoglycan biosynthesis. Upon cellular stress, the histidine kinase VraS transfers the phosphoryl group onto VraR. Upon phosphorylation, VraR dimerizes at the N-terminal domain. In turn, phosphorylation-induced dimerization expand and enhance the VraR binding to its own promoter leading to increased expression and subsequent modulation of as many as 40 genes, which ultimately constitute the S.aureus response to cell wall damage (PubMed:31277575). In addition, inhibits the host autophagic flux and delays the early stage of autophagosome formation, thereby promoting bacterial survival. Facilitates the ability of S.aureus to resist host polymorphonuclear leukocytes-mediated phagocytosis and killing thus contributing to immune evasion (By similarity).</text>
</comment>
<comment type="subunit">
    <text evidence="4">Homodimer.</text>
</comment>
<comment type="PTM">
    <text evidence="4">Phosphorylated by VraS. Phosphorylation state of VraR controls dimerization of the protein.</text>
</comment>
<accession>Q2FX09</accession>
<sequence length="209" mass="23545">MTIKVLFVDDHEMVRIGISSYLSTQSDIEVVGEGASGKEAIAKAHELKPDLILMDLLMDDMDGVEATTQIKKDLPQIKVLMLTSFIEDKEVYRALDAGVDSYILKTTSAKDIADAVRKTSRGESVFEPEVLVKMRNRMKKRAELYEMLTEREMEILLLIAKGYSNQEIASASHITIKTVKTHVSNILSKLEVQDRTQAVIYAFQHNLIQ</sequence>
<keyword id="KW-0002">3D-structure</keyword>
<keyword id="KW-0238">DNA-binding</keyword>
<keyword id="KW-0597">Phosphoprotein</keyword>
<keyword id="KW-1185">Reference proteome</keyword>
<keyword id="KW-0804">Transcription</keyword>
<keyword id="KW-0805">Transcription regulation</keyword>
<reference key="1">
    <citation type="book" date="2006" name="Gram positive pathogens, 2nd edition">
        <title>The Staphylococcus aureus NCTC 8325 genome.</title>
        <editorList>
            <person name="Fischetti V."/>
            <person name="Novick R."/>
            <person name="Ferretti J."/>
            <person name="Portnoy D."/>
            <person name="Rood J."/>
        </editorList>
        <authorList>
            <person name="Gillaspy A.F."/>
            <person name="Worrell V."/>
            <person name="Orvis J."/>
            <person name="Roe B.A."/>
            <person name="Dyer D.W."/>
            <person name="Iandolo J.J."/>
        </authorList>
    </citation>
    <scope>NUCLEOTIDE SEQUENCE [LARGE SCALE GENOMIC DNA]</scope>
    <source>
        <strain>NCTC 8325 / PS 47</strain>
    </source>
</reference>
<reference key="2">
    <citation type="journal article" date="2019" name="BMC Microbiol.">
        <title>The dimerization interface in VraR is essential for induction of the cell wall stress response in Staphylococcus aureus: a potential druggable target.</title>
        <authorList>
            <person name="Tajbakhsh G."/>
            <person name="Golemi-Kotra D."/>
        </authorList>
    </citation>
    <scope>FUNCTION</scope>
    <scope>SUBUNIT</scope>
    <scope>MUTAGENESIS OF MET-13</scope>
    <scope>PHOSPHORYLATION</scope>
    <source>
        <strain>RN4220</strain>
    </source>
</reference>
<gene>
    <name type="primary">vraR</name>
    <name type="ordered locus">SAOUHSC_02098</name>
</gene>
<evidence type="ECO:0000250" key="1">
    <source>
        <dbReference type="UniProtKB" id="Q9KWK8"/>
    </source>
</evidence>
<evidence type="ECO:0000255" key="2">
    <source>
        <dbReference type="PROSITE-ProRule" id="PRU00169"/>
    </source>
</evidence>
<evidence type="ECO:0000255" key="3">
    <source>
        <dbReference type="PROSITE-ProRule" id="PRU00411"/>
    </source>
</evidence>
<evidence type="ECO:0000269" key="4">
    <source>
    </source>
</evidence>
<evidence type="ECO:0007829" key="5">
    <source>
        <dbReference type="PDB" id="7VE5"/>
    </source>
</evidence>
<feature type="chain" id="PRO_0000448243" description="Response regulator protein VraR">
    <location>
        <begin position="1"/>
        <end position="209"/>
    </location>
</feature>
<feature type="domain" description="Response regulatory" evidence="2">
    <location>
        <begin position="4"/>
        <end position="120"/>
    </location>
</feature>
<feature type="domain" description="HTH luxR-type" evidence="3">
    <location>
        <begin position="141"/>
        <end position="206"/>
    </location>
</feature>
<feature type="DNA-binding region" description="H-T-H motif" evidence="3">
    <location>
        <begin position="165"/>
        <end position="184"/>
    </location>
</feature>
<feature type="modified residue" description="4-aspartylphosphate" evidence="2">
    <location>
        <position position="55"/>
    </location>
</feature>
<feature type="mutagenesis site" description="Loss of dimerization and binding to target promoter." evidence="4">
    <original>M</original>
    <variation>A</variation>
    <location>
        <position position="13"/>
    </location>
</feature>
<feature type="helix" evidence="5">
    <location>
        <begin position="144"/>
        <end position="147"/>
    </location>
</feature>
<feature type="helix" evidence="5">
    <location>
        <begin position="150"/>
        <end position="159"/>
    </location>
</feature>
<feature type="turn" evidence="5">
    <location>
        <begin position="160"/>
        <end position="162"/>
    </location>
</feature>
<feature type="helix" evidence="5">
    <location>
        <begin position="165"/>
        <end position="172"/>
    </location>
</feature>
<feature type="helix" evidence="5">
    <location>
        <begin position="176"/>
        <end position="189"/>
    </location>
</feature>
<feature type="helix" evidence="5">
    <location>
        <begin position="195"/>
        <end position="204"/>
    </location>
</feature>
<protein>
    <recommendedName>
        <fullName>Response regulator protein VraR</fullName>
    </recommendedName>
</protein>
<dbReference type="EMBL" id="CP000253">
    <property type="protein sequence ID" value="ABD31148.1"/>
    <property type="molecule type" value="Genomic_DNA"/>
</dbReference>
<dbReference type="RefSeq" id="WP_000153530.1">
    <property type="nucleotide sequence ID" value="NZ_LS483365.1"/>
</dbReference>
<dbReference type="RefSeq" id="YP_500589.1">
    <property type="nucleotide sequence ID" value="NC_007795.1"/>
</dbReference>
<dbReference type="PDB" id="7VE5">
    <property type="method" value="X-ray"/>
    <property type="resolution" value="2.00 A"/>
    <property type="chains" value="A/B=138-209"/>
</dbReference>
<dbReference type="PDBsum" id="7VE5"/>
<dbReference type="SMR" id="Q2FX09"/>
<dbReference type="STRING" id="93061.SAOUHSC_02098"/>
<dbReference type="PaxDb" id="1280-SAXN108_1981"/>
<dbReference type="GeneID" id="3921170"/>
<dbReference type="KEGG" id="sao:SAOUHSC_02098"/>
<dbReference type="PATRIC" id="fig|93061.5.peg.1903"/>
<dbReference type="eggNOG" id="COG2197">
    <property type="taxonomic scope" value="Bacteria"/>
</dbReference>
<dbReference type="HOGENOM" id="CLU_000445_90_10_9"/>
<dbReference type="OrthoDB" id="9780153at2"/>
<dbReference type="Proteomes" id="UP000008816">
    <property type="component" value="Chromosome"/>
</dbReference>
<dbReference type="GO" id="GO:0003677">
    <property type="term" value="F:DNA binding"/>
    <property type="evidence" value="ECO:0007669"/>
    <property type="project" value="UniProtKB-KW"/>
</dbReference>
<dbReference type="GO" id="GO:0000160">
    <property type="term" value="P:phosphorelay signal transduction system"/>
    <property type="evidence" value="ECO:0007669"/>
    <property type="project" value="InterPro"/>
</dbReference>
<dbReference type="GO" id="GO:0006355">
    <property type="term" value="P:regulation of DNA-templated transcription"/>
    <property type="evidence" value="ECO:0007669"/>
    <property type="project" value="InterPro"/>
</dbReference>
<dbReference type="CDD" id="cd06170">
    <property type="entry name" value="LuxR_C_like"/>
    <property type="match status" value="1"/>
</dbReference>
<dbReference type="CDD" id="cd17535">
    <property type="entry name" value="REC_NarL-like"/>
    <property type="match status" value="1"/>
</dbReference>
<dbReference type="Gene3D" id="3.40.50.2300">
    <property type="match status" value="1"/>
</dbReference>
<dbReference type="InterPro" id="IPR011006">
    <property type="entry name" value="CheY-like_superfamily"/>
</dbReference>
<dbReference type="InterPro" id="IPR016032">
    <property type="entry name" value="Sig_transdc_resp-reg_C-effctor"/>
</dbReference>
<dbReference type="InterPro" id="IPR001789">
    <property type="entry name" value="Sig_transdc_resp-reg_receiver"/>
</dbReference>
<dbReference type="InterPro" id="IPR000792">
    <property type="entry name" value="Tscrpt_reg_LuxR_C"/>
</dbReference>
<dbReference type="InterPro" id="IPR039420">
    <property type="entry name" value="WalR-like"/>
</dbReference>
<dbReference type="PANTHER" id="PTHR43214:SF37">
    <property type="entry name" value="TRANSCRIPTIONAL REGULATORY PROTEIN YDFI"/>
    <property type="match status" value="1"/>
</dbReference>
<dbReference type="PANTHER" id="PTHR43214">
    <property type="entry name" value="TWO-COMPONENT RESPONSE REGULATOR"/>
    <property type="match status" value="1"/>
</dbReference>
<dbReference type="Pfam" id="PF00196">
    <property type="entry name" value="GerE"/>
    <property type="match status" value="1"/>
</dbReference>
<dbReference type="Pfam" id="PF00072">
    <property type="entry name" value="Response_reg"/>
    <property type="match status" value="1"/>
</dbReference>
<dbReference type="PRINTS" id="PR00038">
    <property type="entry name" value="HTHLUXR"/>
</dbReference>
<dbReference type="SMART" id="SM00421">
    <property type="entry name" value="HTH_LUXR"/>
    <property type="match status" value="1"/>
</dbReference>
<dbReference type="SMART" id="SM00448">
    <property type="entry name" value="REC"/>
    <property type="match status" value="1"/>
</dbReference>
<dbReference type="SUPFAM" id="SSF46894">
    <property type="entry name" value="C-terminal effector domain of the bipartite response regulators"/>
    <property type="match status" value="1"/>
</dbReference>
<dbReference type="SUPFAM" id="SSF52172">
    <property type="entry name" value="CheY-like"/>
    <property type="match status" value="1"/>
</dbReference>
<dbReference type="PROSITE" id="PS50043">
    <property type="entry name" value="HTH_LUXR_2"/>
    <property type="match status" value="1"/>
</dbReference>
<dbReference type="PROSITE" id="PS50110">
    <property type="entry name" value="RESPONSE_REGULATORY"/>
    <property type="match status" value="1"/>
</dbReference>